<accession>Q9PP35</accession>
<accession>Q0PA02</accession>
<keyword id="KW-0030">Aminoacyl-tRNA synthetase</keyword>
<keyword id="KW-0067">ATP-binding</keyword>
<keyword id="KW-0963">Cytoplasm</keyword>
<keyword id="KW-0436">Ligase</keyword>
<keyword id="KW-0460">Magnesium</keyword>
<keyword id="KW-0479">Metal-binding</keyword>
<keyword id="KW-0547">Nucleotide-binding</keyword>
<keyword id="KW-0648">Protein biosynthesis</keyword>
<keyword id="KW-1185">Reference proteome</keyword>
<keyword id="KW-0694">RNA-binding</keyword>
<keyword id="KW-0820">tRNA-binding</keyword>
<sequence>MIITKSWLNDWLELEEISSDKIAKTLNSIGIEVDRVGALKAPDKVVVGYVKEKIKHENSDKLSICQVDIGSETLQIVCGAANVDAGQFVAVATKGAIMSNGMEIKEAKLRGVDSCGMLCSSLELGFEKINEGIMLLDESIGKLELGRPLNTYEIFNDELIEVELTPNRGDCLSIYGIARDLAAALNLNLKEPKPFKESENVLGIGRILRLAAEKELNGLYNYRAIGLKEEIQTNLLLSLRLAQIEGLGKNSIENLLNYATHSTGVLFNAYDLSSFSEKDEEFTINLSKQVHGETKVSYKDKLLSFSGIFQNNESRCKDDSKIIIIEANYTDPLVIADAKIYHKDQDEKMLYRSFRGSEPKLNLGMDFLLGIFEQIPNLVIYSSSQQILTDKELPIIPISIEGISDIIGQNVDKDEVLKILKKLGFELILSGEGLINVKAPLHRPDIKNLSDICEEVVRIIGIDNIASKGLEFIEKNRLNSAYKNYIEFLNLRKRAVASGYFESLHYVLDNGEELKRLGFDSVKLKLINPITAELNTLRTTLLNHLLNAASLNAKNSKKIIKLFELGAVFNVNNQELNRIAFIHSGLKEEAKISNKAKPESVQFYDFLLDIKNIIGDFKLKSSKYNILSPYEQADIYLSDIKVGFIGRLHLKIENERDLPKTYICELDLDLIRQDFKIAKPYSKFPAITRDLSVLIPKGFEYNQIKNCIEELNLEILENFRLVDIYSDENLKEFYSITISFSFRDINKTLEDNQVNECMDKILNTLKNLGLDLR</sequence>
<gene>
    <name type="primary">pheT</name>
    <name type="ordered locus">Cj0896</name>
</gene>
<feature type="chain" id="PRO_0000126861" description="Phenylalanine--tRNA ligase beta subunit">
    <location>
        <begin position="1"/>
        <end position="773"/>
    </location>
</feature>
<feature type="domain" description="tRNA-binding">
    <location>
        <begin position="39"/>
        <end position="150"/>
    </location>
</feature>
<feature type="domain" description="B5">
    <location>
        <begin position="391"/>
        <end position="467"/>
    </location>
</feature>
<feature type="domain" description="FDX-ACB">
    <location>
        <begin position="682"/>
        <end position="773"/>
    </location>
</feature>
<feature type="binding site" evidence="1">
    <location>
        <position position="445"/>
    </location>
    <ligand>
        <name>Mg(2+)</name>
        <dbReference type="ChEBI" id="CHEBI:18420"/>
        <note>shared with alpha subunit</note>
    </ligand>
</feature>
<feature type="binding site" evidence="1">
    <location>
        <position position="451"/>
    </location>
    <ligand>
        <name>Mg(2+)</name>
        <dbReference type="ChEBI" id="CHEBI:18420"/>
        <note>shared with alpha subunit</note>
    </ligand>
</feature>
<feature type="binding site" evidence="1">
    <location>
        <position position="454"/>
    </location>
    <ligand>
        <name>Mg(2+)</name>
        <dbReference type="ChEBI" id="CHEBI:18420"/>
        <note>shared with alpha subunit</note>
    </ligand>
</feature>
<feature type="binding site" evidence="1">
    <location>
        <position position="455"/>
    </location>
    <ligand>
        <name>Mg(2+)</name>
        <dbReference type="ChEBI" id="CHEBI:18420"/>
        <note>shared with alpha subunit</note>
    </ligand>
</feature>
<comment type="catalytic activity">
    <reaction>
        <text>tRNA(Phe) + L-phenylalanine + ATP = L-phenylalanyl-tRNA(Phe) + AMP + diphosphate + H(+)</text>
        <dbReference type="Rhea" id="RHEA:19413"/>
        <dbReference type="Rhea" id="RHEA-COMP:9668"/>
        <dbReference type="Rhea" id="RHEA-COMP:9699"/>
        <dbReference type="ChEBI" id="CHEBI:15378"/>
        <dbReference type="ChEBI" id="CHEBI:30616"/>
        <dbReference type="ChEBI" id="CHEBI:33019"/>
        <dbReference type="ChEBI" id="CHEBI:58095"/>
        <dbReference type="ChEBI" id="CHEBI:78442"/>
        <dbReference type="ChEBI" id="CHEBI:78531"/>
        <dbReference type="ChEBI" id="CHEBI:456215"/>
        <dbReference type="EC" id="6.1.1.20"/>
    </reaction>
</comment>
<comment type="cofactor">
    <cofactor evidence="1">
        <name>Mg(2+)</name>
        <dbReference type="ChEBI" id="CHEBI:18420"/>
    </cofactor>
    <text evidence="1">Binds 2 magnesium ions per tetramer.</text>
</comment>
<comment type="subunit">
    <text evidence="1">Tetramer of two alpha and two beta subunits.</text>
</comment>
<comment type="subcellular location">
    <subcellularLocation>
        <location evidence="1">Cytoplasm</location>
    </subcellularLocation>
</comment>
<comment type="similarity">
    <text evidence="2">Belongs to the phenylalanyl-tRNA synthetase beta subunit family. Type 1 subfamily.</text>
</comment>
<evidence type="ECO:0000250" key="1"/>
<evidence type="ECO:0000305" key="2"/>
<dbReference type="EC" id="6.1.1.20"/>
<dbReference type="EMBL" id="AL111168">
    <property type="protein sequence ID" value="CAL35017.1"/>
    <property type="molecule type" value="Genomic_DNA"/>
</dbReference>
<dbReference type="PIR" id="H81362">
    <property type="entry name" value="H81362"/>
</dbReference>
<dbReference type="RefSeq" id="WP_002915726.1">
    <property type="nucleotide sequence ID" value="NZ_SZUC01000001.1"/>
</dbReference>
<dbReference type="RefSeq" id="YP_002344295.1">
    <property type="nucleotide sequence ID" value="NC_002163.1"/>
</dbReference>
<dbReference type="SMR" id="Q9PP35"/>
<dbReference type="IntAct" id="Q9PP35">
    <property type="interactions" value="1"/>
</dbReference>
<dbReference type="STRING" id="192222.Cj0896c"/>
<dbReference type="PaxDb" id="192222-Cj0896c"/>
<dbReference type="EnsemblBacteria" id="CAL35017">
    <property type="protein sequence ID" value="CAL35017"/>
    <property type="gene ID" value="Cj0896c"/>
</dbReference>
<dbReference type="GeneID" id="905191"/>
<dbReference type="KEGG" id="cje:Cj0896c"/>
<dbReference type="PATRIC" id="fig|192222.6.peg.880"/>
<dbReference type="eggNOG" id="COG0072">
    <property type="taxonomic scope" value="Bacteria"/>
</dbReference>
<dbReference type="eggNOG" id="COG0073">
    <property type="taxonomic scope" value="Bacteria"/>
</dbReference>
<dbReference type="HOGENOM" id="CLU_016891_2_1_7"/>
<dbReference type="OrthoDB" id="9805455at2"/>
<dbReference type="Proteomes" id="UP000000799">
    <property type="component" value="Chromosome"/>
</dbReference>
<dbReference type="GO" id="GO:0009328">
    <property type="term" value="C:phenylalanine-tRNA ligase complex"/>
    <property type="evidence" value="ECO:0007669"/>
    <property type="project" value="TreeGrafter"/>
</dbReference>
<dbReference type="GO" id="GO:0005524">
    <property type="term" value="F:ATP binding"/>
    <property type="evidence" value="ECO:0007669"/>
    <property type="project" value="UniProtKB-UniRule"/>
</dbReference>
<dbReference type="GO" id="GO:0000287">
    <property type="term" value="F:magnesium ion binding"/>
    <property type="evidence" value="ECO:0007669"/>
    <property type="project" value="UniProtKB-UniRule"/>
</dbReference>
<dbReference type="GO" id="GO:0004826">
    <property type="term" value="F:phenylalanine-tRNA ligase activity"/>
    <property type="evidence" value="ECO:0007669"/>
    <property type="project" value="UniProtKB-UniRule"/>
</dbReference>
<dbReference type="GO" id="GO:0000049">
    <property type="term" value="F:tRNA binding"/>
    <property type="evidence" value="ECO:0007669"/>
    <property type="project" value="UniProtKB-KW"/>
</dbReference>
<dbReference type="GO" id="GO:0006432">
    <property type="term" value="P:phenylalanyl-tRNA aminoacylation"/>
    <property type="evidence" value="ECO:0007669"/>
    <property type="project" value="UniProtKB-UniRule"/>
</dbReference>
<dbReference type="CDD" id="cd00769">
    <property type="entry name" value="PheRS_beta_core"/>
    <property type="match status" value="1"/>
</dbReference>
<dbReference type="CDD" id="cd02796">
    <property type="entry name" value="tRNA_bind_bactPheRS"/>
    <property type="match status" value="1"/>
</dbReference>
<dbReference type="FunFam" id="2.40.50.140:FF:000045">
    <property type="entry name" value="Phenylalanine--tRNA ligase beta subunit"/>
    <property type="match status" value="1"/>
</dbReference>
<dbReference type="Gene3D" id="3.30.56.10">
    <property type="match status" value="2"/>
</dbReference>
<dbReference type="Gene3D" id="3.30.930.10">
    <property type="entry name" value="Bira Bifunctional Protein, Domain 2"/>
    <property type="match status" value="1"/>
</dbReference>
<dbReference type="Gene3D" id="3.30.70.380">
    <property type="entry name" value="Ferrodoxin-fold anticodon-binding domain"/>
    <property type="match status" value="1"/>
</dbReference>
<dbReference type="Gene3D" id="2.40.50.140">
    <property type="entry name" value="Nucleic acid-binding proteins"/>
    <property type="match status" value="1"/>
</dbReference>
<dbReference type="Gene3D" id="3.50.40.10">
    <property type="entry name" value="Phenylalanyl-trna Synthetase, Chain B, domain 3"/>
    <property type="match status" value="1"/>
</dbReference>
<dbReference type="HAMAP" id="MF_00283">
    <property type="entry name" value="Phe_tRNA_synth_beta1"/>
    <property type="match status" value="1"/>
</dbReference>
<dbReference type="InterPro" id="IPR045864">
    <property type="entry name" value="aa-tRNA-synth_II/BPL/LPL"/>
</dbReference>
<dbReference type="InterPro" id="IPR005146">
    <property type="entry name" value="B3/B4_tRNA-bd"/>
</dbReference>
<dbReference type="InterPro" id="IPR009061">
    <property type="entry name" value="DNA-bd_dom_put_sf"/>
</dbReference>
<dbReference type="InterPro" id="IPR005121">
    <property type="entry name" value="Fdx_antiC-bd"/>
</dbReference>
<dbReference type="InterPro" id="IPR036690">
    <property type="entry name" value="Fdx_antiC-bd_sf"/>
</dbReference>
<dbReference type="InterPro" id="IPR012340">
    <property type="entry name" value="NA-bd_OB-fold"/>
</dbReference>
<dbReference type="InterPro" id="IPR045060">
    <property type="entry name" value="Phe-tRNA-ligase_IIc_bsu"/>
</dbReference>
<dbReference type="InterPro" id="IPR004532">
    <property type="entry name" value="Phe-tRNA-ligase_IIc_bsu_bact"/>
</dbReference>
<dbReference type="InterPro" id="IPR020825">
    <property type="entry name" value="Phe-tRNA_synthase-like_B3/B4"/>
</dbReference>
<dbReference type="InterPro" id="IPR041616">
    <property type="entry name" value="PheRS_beta_core"/>
</dbReference>
<dbReference type="InterPro" id="IPR002547">
    <property type="entry name" value="tRNA-bd_dom"/>
</dbReference>
<dbReference type="InterPro" id="IPR033714">
    <property type="entry name" value="tRNA_bind_bactPheRS"/>
</dbReference>
<dbReference type="InterPro" id="IPR005147">
    <property type="entry name" value="tRNA_synthase_B5-dom"/>
</dbReference>
<dbReference type="NCBIfam" id="TIGR00472">
    <property type="entry name" value="pheT_bact"/>
    <property type="match status" value="1"/>
</dbReference>
<dbReference type="NCBIfam" id="NF045760">
    <property type="entry name" value="YtpR"/>
    <property type="match status" value="1"/>
</dbReference>
<dbReference type="PANTHER" id="PTHR10947:SF0">
    <property type="entry name" value="PHENYLALANINE--TRNA LIGASE BETA SUBUNIT"/>
    <property type="match status" value="1"/>
</dbReference>
<dbReference type="PANTHER" id="PTHR10947">
    <property type="entry name" value="PHENYLALANYL-TRNA SYNTHETASE BETA CHAIN AND LEUCINE-RICH REPEAT-CONTAINING PROTEIN 47"/>
    <property type="match status" value="1"/>
</dbReference>
<dbReference type="Pfam" id="PF03483">
    <property type="entry name" value="B3_4"/>
    <property type="match status" value="1"/>
</dbReference>
<dbReference type="Pfam" id="PF03484">
    <property type="entry name" value="B5"/>
    <property type="match status" value="1"/>
</dbReference>
<dbReference type="Pfam" id="PF03147">
    <property type="entry name" value="FDX-ACB"/>
    <property type="match status" value="1"/>
</dbReference>
<dbReference type="Pfam" id="PF01588">
    <property type="entry name" value="tRNA_bind"/>
    <property type="match status" value="1"/>
</dbReference>
<dbReference type="Pfam" id="PF17759">
    <property type="entry name" value="tRNA_synthFbeta"/>
    <property type="match status" value="1"/>
</dbReference>
<dbReference type="SMART" id="SM00873">
    <property type="entry name" value="B3_4"/>
    <property type="match status" value="1"/>
</dbReference>
<dbReference type="SMART" id="SM00874">
    <property type="entry name" value="B5"/>
    <property type="match status" value="1"/>
</dbReference>
<dbReference type="SMART" id="SM00896">
    <property type="entry name" value="FDX-ACB"/>
    <property type="match status" value="1"/>
</dbReference>
<dbReference type="SUPFAM" id="SSF54991">
    <property type="entry name" value="Anticodon-binding domain of PheRS"/>
    <property type="match status" value="1"/>
</dbReference>
<dbReference type="SUPFAM" id="SSF55681">
    <property type="entry name" value="Class II aaRS and biotin synthetases"/>
    <property type="match status" value="1"/>
</dbReference>
<dbReference type="SUPFAM" id="SSF50249">
    <property type="entry name" value="Nucleic acid-binding proteins"/>
    <property type="match status" value="1"/>
</dbReference>
<dbReference type="SUPFAM" id="SSF56037">
    <property type="entry name" value="PheT/TilS domain"/>
    <property type="match status" value="1"/>
</dbReference>
<dbReference type="SUPFAM" id="SSF46955">
    <property type="entry name" value="Putative DNA-binding domain"/>
    <property type="match status" value="1"/>
</dbReference>
<dbReference type="PROSITE" id="PS51483">
    <property type="entry name" value="B5"/>
    <property type="match status" value="1"/>
</dbReference>
<dbReference type="PROSITE" id="PS51447">
    <property type="entry name" value="FDX_ACB"/>
    <property type="match status" value="1"/>
</dbReference>
<dbReference type="PROSITE" id="PS50886">
    <property type="entry name" value="TRBD"/>
    <property type="match status" value="1"/>
</dbReference>
<reference key="1">
    <citation type="journal article" date="2000" name="Nature">
        <title>The genome sequence of the food-borne pathogen Campylobacter jejuni reveals hypervariable sequences.</title>
        <authorList>
            <person name="Parkhill J."/>
            <person name="Wren B.W."/>
            <person name="Mungall K.L."/>
            <person name="Ketley J.M."/>
            <person name="Churcher C.M."/>
            <person name="Basham D."/>
            <person name="Chillingworth T."/>
            <person name="Davies R.M."/>
            <person name="Feltwell T."/>
            <person name="Holroyd S."/>
            <person name="Jagels K."/>
            <person name="Karlyshev A.V."/>
            <person name="Moule S."/>
            <person name="Pallen M.J."/>
            <person name="Penn C.W."/>
            <person name="Quail M.A."/>
            <person name="Rajandream M.A."/>
            <person name="Rutherford K.M."/>
            <person name="van Vliet A.H.M."/>
            <person name="Whitehead S."/>
            <person name="Barrell B.G."/>
        </authorList>
    </citation>
    <scope>NUCLEOTIDE SEQUENCE [LARGE SCALE GENOMIC DNA]</scope>
    <source>
        <strain>ATCC 700819 / NCTC 11168</strain>
    </source>
</reference>
<proteinExistence type="inferred from homology"/>
<organism>
    <name type="scientific">Campylobacter jejuni subsp. jejuni serotype O:2 (strain ATCC 700819 / NCTC 11168)</name>
    <dbReference type="NCBI Taxonomy" id="192222"/>
    <lineage>
        <taxon>Bacteria</taxon>
        <taxon>Pseudomonadati</taxon>
        <taxon>Campylobacterota</taxon>
        <taxon>Epsilonproteobacteria</taxon>
        <taxon>Campylobacterales</taxon>
        <taxon>Campylobacteraceae</taxon>
        <taxon>Campylobacter</taxon>
    </lineage>
</organism>
<name>SYFB_CAMJE</name>
<protein>
    <recommendedName>
        <fullName>Phenylalanine--tRNA ligase beta subunit</fullName>
        <ecNumber>6.1.1.20</ecNumber>
    </recommendedName>
    <alternativeName>
        <fullName>Phenylalanyl-tRNA synthetase beta subunit</fullName>
        <shortName>PheRS</shortName>
    </alternativeName>
</protein>